<comment type="subcellular location">
    <subcellularLocation>
        <location evidence="5">Membrane</location>
        <topology evidence="5">Single-pass type I membrane protein</topology>
    </subcellularLocation>
</comment>
<comment type="alternative products">
    <event type="alternative splicing"/>
    <isoform>
        <id>P34595-1</id>
        <name>a</name>
        <sequence type="displayed"/>
    </isoform>
    <isoform>
        <id>P34595-2</id>
        <name>b</name>
        <sequence type="described" ref="VSP_002450 VSP_002451"/>
    </isoform>
</comment>
<gene>
    <name evidence="6" type="primary">iglr-2</name>
    <name evidence="6" type="ORF">ZC262.3</name>
</gene>
<feature type="signal peptide" evidence="1">
    <location>
        <begin position="1"/>
        <end position="20"/>
    </location>
</feature>
<feature type="chain" id="PRO_0000072708" description="Immunoglobulin domain and leucine-rich repeat-containing protein 2" evidence="5">
    <location>
        <begin position="21"/>
        <end position="773"/>
    </location>
</feature>
<feature type="topological domain" description="Extracellular" evidence="1">
    <location>
        <begin position="21"/>
        <end position="493"/>
    </location>
</feature>
<feature type="transmembrane region" description="Helical" evidence="1">
    <location>
        <begin position="494"/>
        <end position="514"/>
    </location>
</feature>
<feature type="topological domain" description="Cytoplasmic" evidence="1">
    <location>
        <begin position="515"/>
        <end position="773"/>
    </location>
</feature>
<feature type="repeat" description="LRR 1" evidence="1">
    <location>
        <begin position="52"/>
        <end position="73"/>
    </location>
</feature>
<feature type="repeat" description="LRR 2" evidence="1">
    <location>
        <begin position="74"/>
        <end position="96"/>
    </location>
</feature>
<feature type="repeat" description="LRR 3" evidence="1">
    <location>
        <begin position="97"/>
        <end position="120"/>
    </location>
</feature>
<feature type="repeat" description="LRR 4" evidence="1">
    <location>
        <begin position="122"/>
        <end position="144"/>
    </location>
</feature>
<feature type="repeat" description="LRR 5" evidence="1">
    <location>
        <begin position="145"/>
        <end position="167"/>
    </location>
</feature>
<feature type="repeat" description="LRR 6" evidence="1">
    <location>
        <begin position="168"/>
        <end position="191"/>
    </location>
</feature>
<feature type="repeat" description="LRR 7" evidence="1">
    <location>
        <begin position="206"/>
        <end position="230"/>
    </location>
</feature>
<feature type="repeat" description="LRR 8" evidence="1">
    <location>
        <begin position="233"/>
        <end position="251"/>
    </location>
</feature>
<feature type="repeat" description="LRR 9" evidence="1">
    <location>
        <begin position="252"/>
        <end position="275"/>
    </location>
</feature>
<feature type="repeat" description="LRR 10" evidence="1">
    <location>
        <begin position="296"/>
        <end position="319"/>
    </location>
</feature>
<feature type="domain" description="Ig-like" evidence="2">
    <location>
        <begin position="349"/>
        <end position="479"/>
    </location>
</feature>
<feature type="region of interest" description="Disordered" evidence="3">
    <location>
        <begin position="725"/>
        <end position="773"/>
    </location>
</feature>
<feature type="compositionally biased region" description="Polar residues" evidence="3">
    <location>
        <begin position="733"/>
        <end position="745"/>
    </location>
</feature>
<feature type="compositionally biased region" description="Low complexity" evidence="3">
    <location>
        <begin position="746"/>
        <end position="763"/>
    </location>
</feature>
<feature type="compositionally biased region" description="Basic and acidic residues" evidence="3">
    <location>
        <begin position="764"/>
        <end position="773"/>
    </location>
</feature>
<feature type="glycosylation site" description="N-linked (GlcNAc...) asparagine" evidence="4">
    <location>
        <position position="114"/>
    </location>
</feature>
<feature type="glycosylation site" description="N-linked (GlcNAc...) asparagine" evidence="4">
    <location>
        <position position="204"/>
    </location>
</feature>
<feature type="glycosylation site" description="N-linked (GlcNAc...) asparagine" evidence="4">
    <location>
        <position position="361"/>
    </location>
</feature>
<feature type="glycosylation site" description="N-linked (GlcNAc...) asparagine" evidence="4">
    <location>
        <position position="379"/>
    </location>
</feature>
<feature type="disulfide bond" evidence="2">
    <location>
        <begin position="396"/>
        <end position="463"/>
    </location>
</feature>
<feature type="splice variant" id="VSP_002450" description="In isoform b." evidence="5">
    <original>FQNYKAAQVDAVHSHLDAMRDGYNNQLGRVREYGSKRA</original>
    <variation>LNHFVCLSITIPKSVPSSSDLSFLFAISPKTLTYHLQE</variation>
    <location>
        <begin position="587"/>
        <end position="624"/>
    </location>
</feature>
<feature type="splice variant" id="VSP_002451" description="In isoform b." evidence="5">
    <location>
        <begin position="625"/>
        <end position="773"/>
    </location>
</feature>
<evidence type="ECO:0000255" key="1"/>
<evidence type="ECO:0000255" key="2">
    <source>
        <dbReference type="PROSITE-ProRule" id="PRU00114"/>
    </source>
</evidence>
<evidence type="ECO:0000256" key="3">
    <source>
        <dbReference type="SAM" id="MobiDB-lite"/>
    </source>
</evidence>
<evidence type="ECO:0000269" key="4">
    <source>
    </source>
</evidence>
<evidence type="ECO:0000305" key="5"/>
<evidence type="ECO:0000312" key="6">
    <source>
        <dbReference type="WormBase" id="ZC262.3a"/>
    </source>
</evidence>
<accession>P34595</accession>
<name>IGLR2_CAEEL</name>
<keyword id="KW-0025">Alternative splicing</keyword>
<keyword id="KW-1015">Disulfide bond</keyword>
<keyword id="KW-0325">Glycoprotein</keyword>
<keyword id="KW-0393">Immunoglobulin domain</keyword>
<keyword id="KW-0433">Leucine-rich repeat</keyword>
<keyword id="KW-0472">Membrane</keyword>
<keyword id="KW-1185">Reference proteome</keyword>
<keyword id="KW-0677">Repeat</keyword>
<keyword id="KW-0732">Signal</keyword>
<keyword id="KW-0812">Transmembrane</keyword>
<keyword id="KW-1133">Transmembrane helix</keyword>
<dbReference type="EMBL" id="FO081113">
    <property type="protein sequence ID" value="CCD69194.1"/>
    <property type="molecule type" value="Genomic_DNA"/>
</dbReference>
<dbReference type="EMBL" id="FO081113">
    <property type="protein sequence ID" value="CCD69195.1"/>
    <property type="molecule type" value="Genomic_DNA"/>
</dbReference>
<dbReference type="PIR" id="S44883">
    <property type="entry name" value="S44883"/>
</dbReference>
<dbReference type="RefSeq" id="NP_498833.1">
    <property type="nucleotide sequence ID" value="NM_066432.5"/>
</dbReference>
<dbReference type="RefSeq" id="NP_498834.1">
    <molecule id="P34595-1"/>
    <property type="nucleotide sequence ID" value="NM_066433.9"/>
</dbReference>
<dbReference type="SMR" id="P34595"/>
<dbReference type="BioGRID" id="41379">
    <property type="interactions" value="1"/>
</dbReference>
<dbReference type="FunCoup" id="P34595">
    <property type="interactions" value="139"/>
</dbReference>
<dbReference type="STRING" id="6239.ZC262.3a.1"/>
<dbReference type="GlyCosmos" id="P34595">
    <property type="glycosylation" value="4 sites, No reported glycans"/>
</dbReference>
<dbReference type="iPTMnet" id="P34595"/>
<dbReference type="PaxDb" id="6239-ZC262.3a"/>
<dbReference type="PeptideAtlas" id="P34595"/>
<dbReference type="EnsemblMetazoa" id="ZC262.3.1">
    <molecule id="P34595-1"/>
    <property type="protein sequence ID" value="ZC262.3.1"/>
    <property type="gene ID" value="WBGene00022580"/>
</dbReference>
<dbReference type="EnsemblMetazoa" id="ZC262.3.2">
    <molecule id="P34595-1"/>
    <property type="protein sequence ID" value="ZC262.3.2"/>
    <property type="gene ID" value="WBGene00022580"/>
</dbReference>
<dbReference type="GeneID" id="176175"/>
<dbReference type="KEGG" id="cel:CELE_ZC262.3"/>
<dbReference type="UCSC" id="ZC262.3a">
    <molecule id="P34595-1"/>
    <property type="organism name" value="c. elegans"/>
</dbReference>
<dbReference type="AGR" id="WB:WBGene00022580"/>
<dbReference type="CTD" id="176175"/>
<dbReference type="WormBase" id="ZC262.3a">
    <molecule id="P34595-1"/>
    <property type="protein sequence ID" value="CE27345"/>
    <property type="gene ID" value="WBGene00022580"/>
    <property type="gene designation" value="iglr-2"/>
</dbReference>
<dbReference type="WormBase" id="ZC262.3b">
    <molecule id="P34595-2"/>
    <property type="protein sequence ID" value="CE29616"/>
    <property type="gene ID" value="WBGene00022580"/>
    <property type="gene designation" value="iglr-2"/>
</dbReference>
<dbReference type="eggNOG" id="KOG0619">
    <property type="taxonomic scope" value="Eukaryota"/>
</dbReference>
<dbReference type="GeneTree" id="ENSGT00390000006493"/>
<dbReference type="HOGENOM" id="CLU_020438_0_0_1"/>
<dbReference type="InParanoid" id="P34595"/>
<dbReference type="OMA" id="GMDTYFK"/>
<dbReference type="OrthoDB" id="10061535at2759"/>
<dbReference type="PhylomeDB" id="P34595"/>
<dbReference type="PRO" id="PR:P34595"/>
<dbReference type="Proteomes" id="UP000001940">
    <property type="component" value="Chromosome III"/>
</dbReference>
<dbReference type="Bgee" id="WBGene00022580">
    <property type="expression patterns" value="Expressed in embryo and 4 other cell types or tissues"/>
</dbReference>
<dbReference type="GO" id="GO:0016020">
    <property type="term" value="C:membrane"/>
    <property type="evidence" value="ECO:0007669"/>
    <property type="project" value="UniProtKB-SubCell"/>
</dbReference>
<dbReference type="CDD" id="cd00096">
    <property type="entry name" value="Ig"/>
    <property type="match status" value="1"/>
</dbReference>
<dbReference type="Gene3D" id="2.60.40.10">
    <property type="entry name" value="Immunoglobulins"/>
    <property type="match status" value="1"/>
</dbReference>
<dbReference type="Gene3D" id="3.80.10.10">
    <property type="entry name" value="Ribonuclease Inhibitor"/>
    <property type="match status" value="2"/>
</dbReference>
<dbReference type="InterPro" id="IPR007110">
    <property type="entry name" value="Ig-like_dom"/>
</dbReference>
<dbReference type="InterPro" id="IPR036179">
    <property type="entry name" value="Ig-like_dom_sf"/>
</dbReference>
<dbReference type="InterPro" id="IPR013783">
    <property type="entry name" value="Ig-like_fold"/>
</dbReference>
<dbReference type="InterPro" id="IPR001611">
    <property type="entry name" value="Leu-rich_rpt"/>
</dbReference>
<dbReference type="InterPro" id="IPR032675">
    <property type="entry name" value="LRR_dom_sf"/>
</dbReference>
<dbReference type="PANTHER" id="PTHR24366">
    <property type="entry name" value="IG(IMMUNOGLOBULIN) AND LRR(LEUCINE RICH REPEAT) DOMAINS"/>
    <property type="match status" value="1"/>
</dbReference>
<dbReference type="PANTHER" id="PTHR24366:SF96">
    <property type="entry name" value="LEUCINE RICH REPEAT CONTAINING 53"/>
    <property type="match status" value="1"/>
</dbReference>
<dbReference type="SMART" id="SM00365">
    <property type="entry name" value="LRR_SD22"/>
    <property type="match status" value="3"/>
</dbReference>
<dbReference type="SUPFAM" id="SSF48726">
    <property type="entry name" value="Immunoglobulin"/>
    <property type="match status" value="1"/>
</dbReference>
<dbReference type="SUPFAM" id="SSF52058">
    <property type="entry name" value="L domain-like"/>
    <property type="match status" value="1"/>
</dbReference>
<dbReference type="PROSITE" id="PS50835">
    <property type="entry name" value="IG_LIKE"/>
    <property type="match status" value="1"/>
</dbReference>
<dbReference type="PROSITE" id="PS51450">
    <property type="entry name" value="LRR"/>
    <property type="match status" value="4"/>
</dbReference>
<organism>
    <name type="scientific">Caenorhabditis elegans</name>
    <dbReference type="NCBI Taxonomy" id="6239"/>
    <lineage>
        <taxon>Eukaryota</taxon>
        <taxon>Metazoa</taxon>
        <taxon>Ecdysozoa</taxon>
        <taxon>Nematoda</taxon>
        <taxon>Chromadorea</taxon>
        <taxon>Rhabditida</taxon>
        <taxon>Rhabditina</taxon>
        <taxon>Rhabditomorpha</taxon>
        <taxon>Rhabditoidea</taxon>
        <taxon>Rhabditidae</taxon>
        <taxon>Peloderinae</taxon>
        <taxon>Caenorhabditis</taxon>
    </lineage>
</organism>
<reference key="1">
    <citation type="journal article" date="1994" name="Nature">
        <title>2.2 Mb of contiguous nucleotide sequence from chromosome III of C. elegans.</title>
        <authorList>
            <person name="Wilson R."/>
            <person name="Ainscough R."/>
            <person name="Anderson K."/>
            <person name="Baynes C."/>
            <person name="Berks M."/>
            <person name="Bonfield J."/>
            <person name="Burton J."/>
            <person name="Connell M."/>
            <person name="Copsey T."/>
            <person name="Cooper J."/>
            <person name="Coulson A."/>
            <person name="Craxton M."/>
            <person name="Dear S."/>
            <person name="Du Z."/>
            <person name="Durbin R."/>
            <person name="Favello A."/>
            <person name="Fraser A."/>
            <person name="Fulton L."/>
            <person name="Gardner A."/>
            <person name="Green P."/>
            <person name="Hawkins T."/>
            <person name="Hillier L."/>
            <person name="Jier M."/>
            <person name="Johnston L."/>
            <person name="Jones M."/>
            <person name="Kershaw J."/>
            <person name="Kirsten J."/>
            <person name="Laisster N."/>
            <person name="Latreille P."/>
            <person name="Lightning J."/>
            <person name="Lloyd C."/>
            <person name="Mortimore B."/>
            <person name="O'Callaghan M."/>
            <person name="Parsons J."/>
            <person name="Percy C."/>
            <person name="Rifken L."/>
            <person name="Roopra A."/>
            <person name="Saunders D."/>
            <person name="Shownkeen R."/>
            <person name="Sims M."/>
            <person name="Smaldon N."/>
            <person name="Smith A."/>
            <person name="Smith M."/>
            <person name="Sonnhammer E."/>
            <person name="Staden R."/>
            <person name="Sulston J."/>
            <person name="Thierry-Mieg J."/>
            <person name="Thomas K."/>
            <person name="Vaudin M."/>
            <person name="Vaughan K."/>
            <person name="Waterston R."/>
            <person name="Watson A."/>
            <person name="Weinstock L."/>
            <person name="Wilkinson-Sproat J."/>
            <person name="Wohldman P."/>
        </authorList>
    </citation>
    <scope>NUCLEOTIDE SEQUENCE [LARGE SCALE GENOMIC DNA]</scope>
    <source>
        <strain>Bristol N2</strain>
    </source>
</reference>
<reference key="2">
    <citation type="journal article" date="1998" name="Science">
        <title>Genome sequence of the nematode C. elegans: a platform for investigating biology.</title>
        <authorList>
            <consortium name="The C. elegans sequencing consortium"/>
        </authorList>
    </citation>
    <scope>NUCLEOTIDE SEQUENCE [LARGE SCALE GENOMIC DNA]</scope>
    <scope>ALTERNATIVE SPLICING</scope>
    <source>
        <strain>Bristol N2</strain>
    </source>
</reference>
<reference key="3">
    <citation type="journal article" date="2007" name="Mol. Cell. Proteomics">
        <title>Proteomics reveals N-linked glycoprotein diversity in Caenorhabditis elegans and suggests an atypical translocation mechanism for integral membrane proteins.</title>
        <authorList>
            <person name="Kaji H."/>
            <person name="Kamiie J."/>
            <person name="Kawakami H."/>
            <person name="Kido K."/>
            <person name="Yamauchi Y."/>
            <person name="Shinkawa T."/>
            <person name="Taoka M."/>
            <person name="Takahashi N."/>
            <person name="Isobe T."/>
        </authorList>
    </citation>
    <scope>GLYCOSYLATION [LARGE SCALE ANALYSIS] AT ASN-114; ASN-204; ASN-361 AND ASN-379</scope>
    <scope>IDENTIFICATION BY MASS SPECTROMETRY</scope>
    <source>
        <strain>Bristol N2</strain>
    </source>
</reference>
<protein>
    <recommendedName>
        <fullName evidence="5">Immunoglobulin domain and leucine-rich repeat-containing protein 2</fullName>
    </recommendedName>
</protein>
<sequence length="773" mass="89054">MRKFVFFVVAILIQIHTTTSQRNRSSSPSGFLDLQLEKCPQVLGCRCVRDSTRNIQCFSIDESKLLEIQKIYGSNIQRLELHNWQHDQLNFDIFAPFPQLEHIILRDGDLESLNGTVIHPTLKVLSIENSELTSSSEVCRLLSIFPKIQSLSLSKNYFEKFECDTSNTKLKILDLSQNRISHLEVPNTLRVLNVSRNRLTSFENISTKLTDLDISFNKLSLWPSFDDWKFPNLRSLSAIKLDLQTGFQLDAPLLNSLNIDGASLRYLNFHQILTPKLKKFSARYLTELRNIAGRLPSTVTDVAFTDTMLRTLPADFIPMSSTNHMQKVSFDFSTNQLLCDKCLLQWSLPVYAQTSIRKDCNLTREEIESASCKIGVVANDTGIQYGKYEKPTAISCFSYGVPSPKISWWRFRPAEKLGSYDPITDEISYTNVSETMKESYEIQSGGSLLIRSPNRSHVERYVCVVENEYGKDYGIYHFRLDYLDWYSYDVFNSVFWGGLATSLIVCLISFLLNITWILTRKSALWWIQRAERLSRVRKMVEAMEKYRVRQMESLHEKYTKRVQIVRDNYHQQVEALRVSYASQQEKFQNYKAAQVDAVHSHLDAMRDGYNNQLGRVREYGSKRAEQLWESYERQVNRMRTFSLQHRLKMMRQYKVKQRYVNKLLESLQATSPEVQLENEEKVRAALEIPDDLATIDGSMDTPSRLSRSSSFHSLPEYVIDEQGNVRPGIIPTNAPSIRFTTKPTTSSISNEASTSSPSSSGAHRSPDSPPEKR</sequence>
<proteinExistence type="evidence at protein level"/>